<evidence type="ECO:0000255" key="1">
    <source>
        <dbReference type="HAMAP-Rule" id="MF_01331"/>
    </source>
</evidence>
<evidence type="ECO:0000305" key="2"/>
<organism>
    <name type="scientific">Nocardioides sp. (strain ATCC BAA-499 / JS614)</name>
    <dbReference type="NCBI Taxonomy" id="196162"/>
    <lineage>
        <taxon>Bacteria</taxon>
        <taxon>Bacillati</taxon>
        <taxon>Actinomycetota</taxon>
        <taxon>Actinomycetes</taxon>
        <taxon>Propionibacteriales</taxon>
        <taxon>Nocardioidaceae</taxon>
        <taxon>Nocardioides</taxon>
    </lineage>
</organism>
<sequence>MSTTERRRTSARRETLLGDQPGAFASARYARITPMKARRVVDMVRGLPVDEALSLLQFAPQSASETVYKVLESAVANAELTEGLERGDLVVSVAQVDEGPTMKRWRPRAQGRATRINKRTSHITLVVQPADVVAEKKATPKKRKSA</sequence>
<comment type="function">
    <text evidence="1">This protein binds specifically to 23S rRNA; its binding is stimulated by other ribosomal proteins, e.g. L4, L17, and L20. It is important during the early stages of 50S assembly. It makes multiple contacts with different domains of the 23S rRNA in the assembled 50S subunit and ribosome (By similarity).</text>
</comment>
<comment type="function">
    <text evidence="1">The globular domain of the protein is located near the polypeptide exit tunnel on the outside of the subunit, while an extended beta-hairpin is found that lines the wall of the exit tunnel in the center of the 70S ribosome.</text>
</comment>
<comment type="subunit">
    <text evidence="1">Part of the 50S ribosomal subunit.</text>
</comment>
<comment type="similarity">
    <text evidence="1">Belongs to the universal ribosomal protein uL22 family.</text>
</comment>
<keyword id="KW-1185">Reference proteome</keyword>
<keyword id="KW-0687">Ribonucleoprotein</keyword>
<keyword id="KW-0689">Ribosomal protein</keyword>
<keyword id="KW-0694">RNA-binding</keyword>
<keyword id="KW-0699">rRNA-binding</keyword>
<gene>
    <name evidence="1" type="primary">rplV</name>
    <name type="ordered locus">Noca_3900</name>
</gene>
<feature type="chain" id="PRO_0000354498" description="Large ribosomal subunit protein uL22">
    <location>
        <begin position="1"/>
        <end position="146"/>
    </location>
</feature>
<dbReference type="EMBL" id="CP000509">
    <property type="protein sequence ID" value="ABL83398.1"/>
    <property type="molecule type" value="Genomic_DNA"/>
</dbReference>
<dbReference type="RefSeq" id="WP_011757329.1">
    <property type="nucleotide sequence ID" value="NC_008699.1"/>
</dbReference>
<dbReference type="SMR" id="A1SNL3"/>
<dbReference type="STRING" id="196162.Noca_3900"/>
<dbReference type="KEGG" id="nca:Noca_3900"/>
<dbReference type="eggNOG" id="COG0091">
    <property type="taxonomic scope" value="Bacteria"/>
</dbReference>
<dbReference type="HOGENOM" id="CLU_083987_3_2_11"/>
<dbReference type="OrthoDB" id="9805969at2"/>
<dbReference type="Proteomes" id="UP000000640">
    <property type="component" value="Chromosome"/>
</dbReference>
<dbReference type="GO" id="GO:0022625">
    <property type="term" value="C:cytosolic large ribosomal subunit"/>
    <property type="evidence" value="ECO:0007669"/>
    <property type="project" value="TreeGrafter"/>
</dbReference>
<dbReference type="GO" id="GO:0019843">
    <property type="term" value="F:rRNA binding"/>
    <property type="evidence" value="ECO:0007669"/>
    <property type="project" value="UniProtKB-UniRule"/>
</dbReference>
<dbReference type="GO" id="GO:0003735">
    <property type="term" value="F:structural constituent of ribosome"/>
    <property type="evidence" value="ECO:0007669"/>
    <property type="project" value="InterPro"/>
</dbReference>
<dbReference type="GO" id="GO:0006412">
    <property type="term" value="P:translation"/>
    <property type="evidence" value="ECO:0007669"/>
    <property type="project" value="UniProtKB-UniRule"/>
</dbReference>
<dbReference type="CDD" id="cd00336">
    <property type="entry name" value="Ribosomal_L22"/>
    <property type="match status" value="1"/>
</dbReference>
<dbReference type="Gene3D" id="3.90.470.10">
    <property type="entry name" value="Ribosomal protein L22/L17"/>
    <property type="match status" value="1"/>
</dbReference>
<dbReference type="HAMAP" id="MF_01331_B">
    <property type="entry name" value="Ribosomal_uL22_B"/>
    <property type="match status" value="1"/>
</dbReference>
<dbReference type="InterPro" id="IPR001063">
    <property type="entry name" value="Ribosomal_uL22"/>
</dbReference>
<dbReference type="InterPro" id="IPR005727">
    <property type="entry name" value="Ribosomal_uL22_bac/chlpt-type"/>
</dbReference>
<dbReference type="InterPro" id="IPR047867">
    <property type="entry name" value="Ribosomal_uL22_bac/org-type"/>
</dbReference>
<dbReference type="InterPro" id="IPR018260">
    <property type="entry name" value="Ribosomal_uL22_CS"/>
</dbReference>
<dbReference type="InterPro" id="IPR036394">
    <property type="entry name" value="Ribosomal_uL22_sf"/>
</dbReference>
<dbReference type="NCBIfam" id="TIGR01044">
    <property type="entry name" value="rplV_bact"/>
    <property type="match status" value="1"/>
</dbReference>
<dbReference type="PANTHER" id="PTHR13501">
    <property type="entry name" value="CHLOROPLAST 50S RIBOSOMAL PROTEIN L22-RELATED"/>
    <property type="match status" value="1"/>
</dbReference>
<dbReference type="PANTHER" id="PTHR13501:SF8">
    <property type="entry name" value="LARGE RIBOSOMAL SUBUNIT PROTEIN UL22M"/>
    <property type="match status" value="1"/>
</dbReference>
<dbReference type="Pfam" id="PF00237">
    <property type="entry name" value="Ribosomal_L22"/>
    <property type="match status" value="1"/>
</dbReference>
<dbReference type="SUPFAM" id="SSF54843">
    <property type="entry name" value="Ribosomal protein L22"/>
    <property type="match status" value="1"/>
</dbReference>
<dbReference type="PROSITE" id="PS00464">
    <property type="entry name" value="RIBOSOMAL_L22"/>
    <property type="match status" value="1"/>
</dbReference>
<proteinExistence type="inferred from homology"/>
<reference key="1">
    <citation type="submission" date="2006-12" db="EMBL/GenBank/DDBJ databases">
        <title>Complete sequence of chromosome 1 of Nocardioides sp. JS614.</title>
        <authorList>
            <person name="Copeland A."/>
            <person name="Lucas S."/>
            <person name="Lapidus A."/>
            <person name="Barry K."/>
            <person name="Detter J.C."/>
            <person name="Glavina del Rio T."/>
            <person name="Hammon N."/>
            <person name="Israni S."/>
            <person name="Dalin E."/>
            <person name="Tice H."/>
            <person name="Pitluck S."/>
            <person name="Thompson L.S."/>
            <person name="Brettin T."/>
            <person name="Bruce D."/>
            <person name="Han C."/>
            <person name="Tapia R."/>
            <person name="Schmutz J."/>
            <person name="Larimer F."/>
            <person name="Land M."/>
            <person name="Hauser L."/>
            <person name="Kyrpides N."/>
            <person name="Kim E."/>
            <person name="Mattes T."/>
            <person name="Gossett J."/>
            <person name="Richardson P."/>
        </authorList>
    </citation>
    <scope>NUCLEOTIDE SEQUENCE [LARGE SCALE GENOMIC DNA]</scope>
    <source>
        <strain>ATCC BAA-499 / JS614</strain>
    </source>
</reference>
<accession>A1SNL3</accession>
<name>RL22_NOCSJ</name>
<protein>
    <recommendedName>
        <fullName evidence="1">Large ribosomal subunit protein uL22</fullName>
    </recommendedName>
    <alternativeName>
        <fullName evidence="2">50S ribosomal protein L22</fullName>
    </alternativeName>
</protein>